<organism>
    <name type="scientific">Schizosaccharomyces pombe (strain 972 / ATCC 24843)</name>
    <name type="common">Fission yeast</name>
    <dbReference type="NCBI Taxonomy" id="284812"/>
    <lineage>
        <taxon>Eukaryota</taxon>
        <taxon>Fungi</taxon>
        <taxon>Dikarya</taxon>
        <taxon>Ascomycota</taxon>
        <taxon>Taphrinomycotina</taxon>
        <taxon>Schizosaccharomycetes</taxon>
        <taxon>Schizosaccharomycetales</taxon>
        <taxon>Schizosaccharomycetaceae</taxon>
        <taxon>Schizosaccharomyces</taxon>
    </lineage>
</organism>
<protein>
    <recommendedName>
        <fullName>Ribonucleases P/MRP protein subunit pop1</fullName>
        <ecNumber>3.1.26.5</ecNumber>
    </recommendedName>
</protein>
<comment type="function">
    <text evidence="1">Required for processing of 5.8S rRNA (short form) at site A3 and for 5' and 3' processing of pre-tRNA.</text>
</comment>
<comment type="catalytic activity">
    <reaction>
        <text>Endonucleolytic cleavage of RNA, removing 5'-extranucleotides from tRNA precursor.</text>
        <dbReference type="EC" id="3.1.26.5"/>
    </reaction>
</comment>
<comment type="subunit">
    <text evidence="1">Component of nuclear RNase P and RNase MRP complexes.</text>
</comment>
<comment type="subcellular location">
    <subcellularLocation>
        <location evidence="2 3">Nucleus</location>
        <location evidence="2 3">Nucleolus</location>
    </subcellularLocation>
</comment>
<comment type="similarity">
    <text evidence="4">Belongs to the POP1 family.</text>
</comment>
<comment type="sequence caution" evidence="4">
    <conflict type="erroneous initiation">
        <sequence resource="EMBL-CDS" id="BAA87135"/>
    </conflict>
</comment>
<keyword id="KW-0378">Hydrolase</keyword>
<keyword id="KW-0539">Nucleus</keyword>
<keyword id="KW-1185">Reference proteome</keyword>
<keyword id="KW-0698">rRNA processing</keyword>
<keyword id="KW-0819">tRNA processing</keyword>
<reference key="1">
    <citation type="journal article" date="2002" name="Nature">
        <title>The genome sequence of Schizosaccharomyces pombe.</title>
        <authorList>
            <person name="Wood V."/>
            <person name="Gwilliam R."/>
            <person name="Rajandream M.A."/>
            <person name="Lyne M.H."/>
            <person name="Lyne R."/>
            <person name="Stewart A."/>
            <person name="Sgouros J.G."/>
            <person name="Peat N."/>
            <person name="Hayles J."/>
            <person name="Baker S.G."/>
            <person name="Basham D."/>
            <person name="Bowman S."/>
            <person name="Brooks K."/>
            <person name="Brown D."/>
            <person name="Brown S."/>
            <person name="Chillingworth T."/>
            <person name="Churcher C.M."/>
            <person name="Collins M."/>
            <person name="Connor R."/>
            <person name="Cronin A."/>
            <person name="Davis P."/>
            <person name="Feltwell T."/>
            <person name="Fraser A."/>
            <person name="Gentles S."/>
            <person name="Goble A."/>
            <person name="Hamlin N."/>
            <person name="Harris D.E."/>
            <person name="Hidalgo J."/>
            <person name="Hodgson G."/>
            <person name="Holroyd S."/>
            <person name="Hornsby T."/>
            <person name="Howarth S."/>
            <person name="Huckle E.J."/>
            <person name="Hunt S."/>
            <person name="Jagels K."/>
            <person name="James K.D."/>
            <person name="Jones L."/>
            <person name="Jones M."/>
            <person name="Leather S."/>
            <person name="McDonald S."/>
            <person name="McLean J."/>
            <person name="Mooney P."/>
            <person name="Moule S."/>
            <person name="Mungall K.L."/>
            <person name="Murphy L.D."/>
            <person name="Niblett D."/>
            <person name="Odell C."/>
            <person name="Oliver K."/>
            <person name="O'Neil S."/>
            <person name="Pearson D."/>
            <person name="Quail M.A."/>
            <person name="Rabbinowitsch E."/>
            <person name="Rutherford K.M."/>
            <person name="Rutter S."/>
            <person name="Saunders D."/>
            <person name="Seeger K."/>
            <person name="Sharp S."/>
            <person name="Skelton J."/>
            <person name="Simmonds M.N."/>
            <person name="Squares R."/>
            <person name="Squares S."/>
            <person name="Stevens K."/>
            <person name="Taylor K."/>
            <person name="Taylor R.G."/>
            <person name="Tivey A."/>
            <person name="Walsh S.V."/>
            <person name="Warren T."/>
            <person name="Whitehead S."/>
            <person name="Woodward J.R."/>
            <person name="Volckaert G."/>
            <person name="Aert R."/>
            <person name="Robben J."/>
            <person name="Grymonprez B."/>
            <person name="Weltjens I."/>
            <person name="Vanstreels E."/>
            <person name="Rieger M."/>
            <person name="Schaefer M."/>
            <person name="Mueller-Auer S."/>
            <person name="Gabel C."/>
            <person name="Fuchs M."/>
            <person name="Duesterhoeft A."/>
            <person name="Fritzc C."/>
            <person name="Holzer E."/>
            <person name="Moestl D."/>
            <person name="Hilbert H."/>
            <person name="Borzym K."/>
            <person name="Langer I."/>
            <person name="Beck A."/>
            <person name="Lehrach H."/>
            <person name="Reinhardt R."/>
            <person name="Pohl T.M."/>
            <person name="Eger P."/>
            <person name="Zimmermann W."/>
            <person name="Wedler H."/>
            <person name="Wambutt R."/>
            <person name="Purnelle B."/>
            <person name="Goffeau A."/>
            <person name="Cadieu E."/>
            <person name="Dreano S."/>
            <person name="Gloux S."/>
            <person name="Lelaure V."/>
            <person name="Mottier S."/>
            <person name="Galibert F."/>
            <person name="Aves S.J."/>
            <person name="Xiang Z."/>
            <person name="Hunt C."/>
            <person name="Moore K."/>
            <person name="Hurst S.M."/>
            <person name="Lucas M."/>
            <person name="Rochet M."/>
            <person name="Gaillardin C."/>
            <person name="Tallada V.A."/>
            <person name="Garzon A."/>
            <person name="Thode G."/>
            <person name="Daga R.R."/>
            <person name="Cruzado L."/>
            <person name="Jimenez J."/>
            <person name="Sanchez M."/>
            <person name="del Rey F."/>
            <person name="Benito J."/>
            <person name="Dominguez A."/>
            <person name="Revuelta J.L."/>
            <person name="Moreno S."/>
            <person name="Armstrong J."/>
            <person name="Forsburg S.L."/>
            <person name="Cerutti L."/>
            <person name="Lowe T."/>
            <person name="McCombie W.R."/>
            <person name="Paulsen I."/>
            <person name="Potashkin J."/>
            <person name="Shpakovski G.V."/>
            <person name="Ussery D."/>
            <person name="Barrell B.G."/>
            <person name="Nurse P."/>
        </authorList>
    </citation>
    <scope>NUCLEOTIDE SEQUENCE [LARGE SCALE GENOMIC DNA]</scope>
    <source>
        <strain>972 / ATCC 24843</strain>
    </source>
</reference>
<reference key="2">
    <citation type="journal article" date="2000" name="Genes Cells">
        <title>Large-scale screening of intracellular protein localization in living fission yeast cells by the use of a GFP-fusion genomic DNA library.</title>
        <authorList>
            <person name="Ding D.-Q."/>
            <person name="Tomita Y."/>
            <person name="Yamamoto A."/>
            <person name="Chikashige Y."/>
            <person name="Haraguchi T."/>
            <person name="Hiraoka Y."/>
        </authorList>
    </citation>
    <scope>NUCLEOTIDE SEQUENCE [LARGE SCALE GENOMIC DNA] OF 1-61</scope>
    <scope>SUBCELLULAR LOCATION</scope>
    <source>
        <strain>ATCC 38364 / 968</strain>
    </source>
</reference>
<reference key="3">
    <citation type="journal article" date="2006" name="Nat. Biotechnol.">
        <title>ORFeome cloning and global analysis of protein localization in the fission yeast Schizosaccharomyces pombe.</title>
        <authorList>
            <person name="Matsuyama A."/>
            <person name="Arai R."/>
            <person name="Yashiroda Y."/>
            <person name="Shirai A."/>
            <person name="Kamata A."/>
            <person name="Sekido S."/>
            <person name="Kobayashi Y."/>
            <person name="Hashimoto A."/>
            <person name="Hamamoto M."/>
            <person name="Hiraoka Y."/>
            <person name="Horinouchi S."/>
            <person name="Yoshida M."/>
        </authorList>
    </citation>
    <scope>SUBCELLULAR LOCATION [LARGE SCALE ANALYSIS]</scope>
</reference>
<sequence>MKRSTGGTQPKGLNVKRSKLADARFIEVESPALSNGAVDLKKFIESRSFEITALQDAMKRSKESSAQRAFQALPRCLRRRAASHNIKRIPKGLRDRALYEMQLSSSSTLPIAPSRQRLKRFIKRLRRKLAKSGETKAIDSTGSLVTDNSTDDSRIPSLAAVKLIRGKFAGRQLRKVWLPTHLWVCKRAHMINAWGYAIPEKPTEKSYRPTHRAAFRKDAIAFDMSYEPLFCISGPYEALKEKFGNSFANGLPPVFLNSSRSFTSYLVKSDIHELICPCFLQWNNPTEDDKKQIPVKNPTECVQLVIRLHPSAFLQAWNYLSGIAVLDDRIAMHDWRLDLASFDIHGPDSNIMLHKVFDDVELDEAGKVWQSISNYSSACLPMGASISVKALVNTRCDKNLSEKGEKSLLDSAENSLPASANQYSTHFRYWERQEIPSFAVFENKNRHTHEKKSSEKEVIPVYITYRKEWNGLTVILPWDYAKFVWRKMMYQKGIRFGGLENLHQIAFEKRMPFFPIDYPDTISGQLCEEERKKRNEDSWKRRPPAKRVNYQKFGDNFSEIGNPFCCDWVYLNEMVKASRDEDKTLQLVRVQVQLVQRGSLQDRARIYCLSDDELSKWKTIIYKENLTAENLLYPKCPNETAIIGFVTTGNFNLNAGKPSGIANVLAKTIKNEKSGYCIIRNVGCSVPRLAQWKFNQSH</sequence>
<feature type="chain" id="PRO_0000337990" description="Ribonucleases P/MRP protein subunit pop1">
    <location>
        <begin position="1"/>
        <end position="698"/>
    </location>
</feature>
<name>POPI_SCHPO</name>
<proteinExistence type="inferred from homology"/>
<dbReference type="EC" id="3.1.26.5"/>
<dbReference type="EMBL" id="CU329670">
    <property type="protein sequence ID" value="CAB61782.1"/>
    <property type="molecule type" value="Genomic_DNA"/>
</dbReference>
<dbReference type="EMBL" id="AB027831">
    <property type="protein sequence ID" value="BAA87135.1"/>
    <property type="status" value="ALT_INIT"/>
    <property type="molecule type" value="Genomic_DNA"/>
</dbReference>
<dbReference type="PIR" id="T50203">
    <property type="entry name" value="T50203"/>
</dbReference>
<dbReference type="SMR" id="Q9UTA4"/>
<dbReference type="BioGRID" id="278048">
    <property type="interactions" value="5"/>
</dbReference>
<dbReference type="FunCoup" id="Q9UTA4">
    <property type="interactions" value="482"/>
</dbReference>
<dbReference type="STRING" id="284812.Q9UTA4"/>
<dbReference type="PaxDb" id="4896-SPAC25B8.16.1"/>
<dbReference type="EnsemblFungi" id="SPAC25B8.16.1">
    <property type="protein sequence ID" value="SPAC25B8.16.1:pep"/>
    <property type="gene ID" value="SPAC25B8.16"/>
</dbReference>
<dbReference type="KEGG" id="spo:2541548"/>
<dbReference type="PomBase" id="SPAC25B8.16"/>
<dbReference type="VEuPathDB" id="FungiDB:SPAC25B8.16"/>
<dbReference type="eggNOG" id="KOG3322">
    <property type="taxonomic scope" value="Eukaryota"/>
</dbReference>
<dbReference type="HOGENOM" id="CLU_007205_0_0_1"/>
<dbReference type="InParanoid" id="Q9UTA4"/>
<dbReference type="OMA" id="WNAKRSH"/>
<dbReference type="PhylomeDB" id="Q9UTA4"/>
<dbReference type="PRO" id="PR:Q9UTA4"/>
<dbReference type="Proteomes" id="UP000002485">
    <property type="component" value="Chromosome I"/>
</dbReference>
<dbReference type="GO" id="GO:0005655">
    <property type="term" value="C:nucleolar ribonuclease P complex"/>
    <property type="evidence" value="ECO:0000318"/>
    <property type="project" value="GO_Central"/>
</dbReference>
<dbReference type="GO" id="GO:0005730">
    <property type="term" value="C:nucleolus"/>
    <property type="evidence" value="ECO:0007005"/>
    <property type="project" value="PomBase"/>
</dbReference>
<dbReference type="GO" id="GO:0005634">
    <property type="term" value="C:nucleus"/>
    <property type="evidence" value="ECO:0007005"/>
    <property type="project" value="PomBase"/>
</dbReference>
<dbReference type="GO" id="GO:0000172">
    <property type="term" value="C:ribonuclease MRP complex"/>
    <property type="evidence" value="ECO:0000269"/>
    <property type="project" value="PomBase"/>
</dbReference>
<dbReference type="GO" id="GO:0030677">
    <property type="term" value="C:ribonuclease P complex"/>
    <property type="evidence" value="ECO:0000314"/>
    <property type="project" value="PomBase"/>
</dbReference>
<dbReference type="GO" id="GO:0004526">
    <property type="term" value="F:ribonuclease P activity"/>
    <property type="evidence" value="ECO:0007669"/>
    <property type="project" value="UniProtKB-EC"/>
</dbReference>
<dbReference type="GO" id="GO:0000049">
    <property type="term" value="F:tRNA binding"/>
    <property type="evidence" value="ECO:0000314"/>
    <property type="project" value="PomBase"/>
</dbReference>
<dbReference type="GO" id="GO:0000447">
    <property type="term" value="P:endonucleolytic cleavage in ITS1 to separate SSU-rRNA from 5.8S rRNA and LSU-rRNA from tricistronic rRNA transcript (SSU-rRNA, 5.8S rRNA, LSU-rRNA)"/>
    <property type="evidence" value="ECO:0000314"/>
    <property type="project" value="PomBase"/>
</dbReference>
<dbReference type="GO" id="GO:0001682">
    <property type="term" value="P:tRNA 5'-leader removal"/>
    <property type="evidence" value="ECO:0000250"/>
    <property type="project" value="PomBase"/>
</dbReference>
<dbReference type="GO" id="GO:0008033">
    <property type="term" value="P:tRNA processing"/>
    <property type="evidence" value="ECO:0000314"/>
    <property type="project" value="PomBase"/>
</dbReference>
<dbReference type="InterPro" id="IPR039182">
    <property type="entry name" value="Pop1"/>
</dbReference>
<dbReference type="InterPro" id="IPR055079">
    <property type="entry name" value="POP1_C"/>
</dbReference>
<dbReference type="InterPro" id="IPR009723">
    <property type="entry name" value="Pop1_N"/>
</dbReference>
<dbReference type="InterPro" id="IPR012590">
    <property type="entry name" value="POPLD_dom"/>
</dbReference>
<dbReference type="PANTHER" id="PTHR22731">
    <property type="entry name" value="RIBONUCLEASES P/MRP PROTEIN SUBUNIT POP1"/>
    <property type="match status" value="1"/>
</dbReference>
<dbReference type="PANTHER" id="PTHR22731:SF3">
    <property type="entry name" value="RIBONUCLEASES P_MRP PROTEIN SUBUNIT POP1"/>
    <property type="match status" value="1"/>
</dbReference>
<dbReference type="Pfam" id="PF22770">
    <property type="entry name" value="POP1_C"/>
    <property type="match status" value="1"/>
</dbReference>
<dbReference type="Pfam" id="PF06978">
    <property type="entry name" value="POP1_N"/>
    <property type="match status" value="1"/>
</dbReference>
<dbReference type="Pfam" id="PF08170">
    <property type="entry name" value="POPLD"/>
    <property type="match status" value="1"/>
</dbReference>
<dbReference type="SUPFAM" id="SSF103025">
    <property type="entry name" value="Folate-binding domain"/>
    <property type="match status" value="1"/>
</dbReference>
<evidence type="ECO:0000250" key="1"/>
<evidence type="ECO:0000269" key="2">
    <source>
    </source>
</evidence>
<evidence type="ECO:0000269" key="3">
    <source>
    </source>
</evidence>
<evidence type="ECO:0000305" key="4"/>
<accession>Q9UTA4</accession>
<accession>Q9UU39</accession>
<gene>
    <name type="primary">pop1</name>
    <name type="ORF">SPAC25B8.16</name>
</gene>